<sequence>MSASGEISTPRDYIGHHLNHLQLDLRTFELVNPHSTGPATFWTLNIDSLFFSVVLGLAFLLVFRKVAASATSGVPGKLQTAVELIIGFVDNSVRDMYHGKSKVIAPLALTVFVWVLLMNMMDLLPIDLLPYIGEHVFGLPALRVVPTADVSITLSMALGVFILIIFYSIKMKGVGGFTKELTMQPFNHPIFIPVNLILEGVSLLSKPLSLGLRLFGNMYAGELIFILIAGLLPWWSQWMLSVPWAIFHILIITLQAFIFMVLTIVYLSMASEEH</sequence>
<comment type="function">
    <text evidence="1">Key component of the proton channel; it plays a direct role in the translocation of protons across the membrane.</text>
</comment>
<comment type="subunit">
    <text evidence="1">F-type ATPases have 2 components, CF(1) - the catalytic core - and CF(0) - the membrane proton channel. CF(1) has five subunits: alpha(3), beta(3), gamma(1), delta(1), epsilon(1). CF(0) has three main subunits: a(1), b(2) and c(9-12). The alpha and beta chains form an alternating ring which encloses part of the gamma chain. CF(1) is attached to CF(0) by a central stalk formed by the gamma and epsilon chains, while a peripheral stalk is formed by the delta and b chains.</text>
</comment>
<comment type="subcellular location">
    <subcellularLocation>
        <location evidence="1">Cell inner membrane</location>
        <topology evidence="1">Multi-pass membrane protein</topology>
    </subcellularLocation>
</comment>
<comment type="similarity">
    <text evidence="1">Belongs to the ATPase A chain family.</text>
</comment>
<proteinExistence type="inferred from homology"/>
<name>ATP6_YERPY</name>
<accession>B1JR35</accession>
<reference key="1">
    <citation type="submission" date="2008-02" db="EMBL/GenBank/DDBJ databases">
        <title>Complete sequence of Yersinia pseudotuberculosis YPIII.</title>
        <authorList>
            <consortium name="US DOE Joint Genome Institute"/>
            <person name="Copeland A."/>
            <person name="Lucas S."/>
            <person name="Lapidus A."/>
            <person name="Glavina del Rio T."/>
            <person name="Dalin E."/>
            <person name="Tice H."/>
            <person name="Bruce D."/>
            <person name="Goodwin L."/>
            <person name="Pitluck S."/>
            <person name="Munk A.C."/>
            <person name="Brettin T."/>
            <person name="Detter J.C."/>
            <person name="Han C."/>
            <person name="Tapia R."/>
            <person name="Schmutz J."/>
            <person name="Larimer F."/>
            <person name="Land M."/>
            <person name="Hauser L."/>
            <person name="Challacombe J.F."/>
            <person name="Green L."/>
            <person name="Lindler L.E."/>
            <person name="Nikolich M.P."/>
            <person name="Richardson P."/>
        </authorList>
    </citation>
    <scope>NUCLEOTIDE SEQUENCE [LARGE SCALE GENOMIC DNA]</scope>
    <source>
        <strain>YPIII</strain>
    </source>
</reference>
<gene>
    <name evidence="1" type="primary">atpB</name>
    <name type="ordered locus">YPK_4220</name>
</gene>
<evidence type="ECO:0000255" key="1">
    <source>
        <dbReference type="HAMAP-Rule" id="MF_01393"/>
    </source>
</evidence>
<dbReference type="EMBL" id="CP000950">
    <property type="protein sequence ID" value="ACA70476.1"/>
    <property type="molecule type" value="Genomic_DNA"/>
</dbReference>
<dbReference type="RefSeq" id="WP_002228150.1">
    <property type="nucleotide sequence ID" value="NZ_CP009792.1"/>
</dbReference>
<dbReference type="SMR" id="B1JR35"/>
<dbReference type="GeneID" id="96663465"/>
<dbReference type="KEGG" id="ypy:YPK_4220"/>
<dbReference type="PATRIC" id="fig|502800.11.peg.570"/>
<dbReference type="GO" id="GO:0005886">
    <property type="term" value="C:plasma membrane"/>
    <property type="evidence" value="ECO:0007669"/>
    <property type="project" value="UniProtKB-SubCell"/>
</dbReference>
<dbReference type="GO" id="GO:0045259">
    <property type="term" value="C:proton-transporting ATP synthase complex"/>
    <property type="evidence" value="ECO:0007669"/>
    <property type="project" value="UniProtKB-KW"/>
</dbReference>
<dbReference type="GO" id="GO:0046933">
    <property type="term" value="F:proton-transporting ATP synthase activity, rotational mechanism"/>
    <property type="evidence" value="ECO:0007669"/>
    <property type="project" value="UniProtKB-UniRule"/>
</dbReference>
<dbReference type="GO" id="GO:0042777">
    <property type="term" value="P:proton motive force-driven plasma membrane ATP synthesis"/>
    <property type="evidence" value="ECO:0007669"/>
    <property type="project" value="TreeGrafter"/>
</dbReference>
<dbReference type="CDD" id="cd00310">
    <property type="entry name" value="ATP-synt_Fo_a_6"/>
    <property type="match status" value="1"/>
</dbReference>
<dbReference type="FunFam" id="1.20.120.220:FF:000002">
    <property type="entry name" value="ATP synthase subunit a"/>
    <property type="match status" value="1"/>
</dbReference>
<dbReference type="Gene3D" id="1.20.120.220">
    <property type="entry name" value="ATP synthase, F0 complex, subunit A"/>
    <property type="match status" value="1"/>
</dbReference>
<dbReference type="HAMAP" id="MF_01393">
    <property type="entry name" value="ATP_synth_a_bact"/>
    <property type="match status" value="1"/>
</dbReference>
<dbReference type="InterPro" id="IPR045082">
    <property type="entry name" value="ATP_syn_F0_a_bact/chloroplast"/>
</dbReference>
<dbReference type="InterPro" id="IPR000568">
    <property type="entry name" value="ATP_synth_F0_asu"/>
</dbReference>
<dbReference type="InterPro" id="IPR023011">
    <property type="entry name" value="ATP_synth_F0_asu_AS"/>
</dbReference>
<dbReference type="InterPro" id="IPR035908">
    <property type="entry name" value="F0_ATP_A_sf"/>
</dbReference>
<dbReference type="NCBIfam" id="TIGR01131">
    <property type="entry name" value="ATP_synt_6_or_A"/>
    <property type="match status" value="1"/>
</dbReference>
<dbReference type="NCBIfam" id="NF004477">
    <property type="entry name" value="PRK05815.1-1"/>
    <property type="match status" value="1"/>
</dbReference>
<dbReference type="PANTHER" id="PTHR42823">
    <property type="entry name" value="ATP SYNTHASE SUBUNIT A, CHLOROPLASTIC"/>
    <property type="match status" value="1"/>
</dbReference>
<dbReference type="PANTHER" id="PTHR42823:SF3">
    <property type="entry name" value="ATP SYNTHASE SUBUNIT A, CHLOROPLASTIC"/>
    <property type="match status" value="1"/>
</dbReference>
<dbReference type="Pfam" id="PF00119">
    <property type="entry name" value="ATP-synt_A"/>
    <property type="match status" value="1"/>
</dbReference>
<dbReference type="PRINTS" id="PR00123">
    <property type="entry name" value="ATPASEA"/>
</dbReference>
<dbReference type="SUPFAM" id="SSF81336">
    <property type="entry name" value="F1F0 ATP synthase subunit A"/>
    <property type="match status" value="1"/>
</dbReference>
<dbReference type="PROSITE" id="PS00449">
    <property type="entry name" value="ATPASE_A"/>
    <property type="match status" value="1"/>
</dbReference>
<organism>
    <name type="scientific">Yersinia pseudotuberculosis serotype O:3 (strain YPIII)</name>
    <dbReference type="NCBI Taxonomy" id="502800"/>
    <lineage>
        <taxon>Bacteria</taxon>
        <taxon>Pseudomonadati</taxon>
        <taxon>Pseudomonadota</taxon>
        <taxon>Gammaproteobacteria</taxon>
        <taxon>Enterobacterales</taxon>
        <taxon>Yersiniaceae</taxon>
        <taxon>Yersinia</taxon>
    </lineage>
</organism>
<keyword id="KW-0066">ATP synthesis</keyword>
<keyword id="KW-0997">Cell inner membrane</keyword>
<keyword id="KW-1003">Cell membrane</keyword>
<keyword id="KW-0138">CF(0)</keyword>
<keyword id="KW-0375">Hydrogen ion transport</keyword>
<keyword id="KW-0406">Ion transport</keyword>
<keyword id="KW-0472">Membrane</keyword>
<keyword id="KW-0812">Transmembrane</keyword>
<keyword id="KW-1133">Transmembrane helix</keyword>
<keyword id="KW-0813">Transport</keyword>
<protein>
    <recommendedName>
        <fullName evidence="1">ATP synthase subunit a</fullName>
    </recommendedName>
    <alternativeName>
        <fullName evidence="1">ATP synthase F0 sector subunit a</fullName>
    </alternativeName>
    <alternativeName>
        <fullName evidence="1">F-ATPase subunit 6</fullName>
    </alternativeName>
</protein>
<feature type="chain" id="PRO_0000362521" description="ATP synthase subunit a">
    <location>
        <begin position="1"/>
        <end position="274"/>
    </location>
</feature>
<feature type="transmembrane region" description="Helical" evidence="1">
    <location>
        <begin position="43"/>
        <end position="63"/>
    </location>
</feature>
<feature type="transmembrane region" description="Helical" evidence="1">
    <location>
        <begin position="103"/>
        <end position="123"/>
    </location>
</feature>
<feature type="transmembrane region" description="Helical" evidence="1">
    <location>
        <begin position="149"/>
        <end position="169"/>
    </location>
</feature>
<feature type="transmembrane region" description="Helical" evidence="1">
    <location>
        <begin position="223"/>
        <end position="243"/>
    </location>
</feature>
<feature type="transmembrane region" description="Helical" evidence="1">
    <location>
        <begin position="245"/>
        <end position="265"/>
    </location>
</feature>